<accession>B8D8Z5</accession>
<protein>
    <recommendedName>
        <fullName evidence="1">Pantothenate synthetase</fullName>
        <shortName evidence="1">PS</shortName>
        <ecNumber evidence="1">6.3.2.1</ecNumber>
    </recommendedName>
    <alternativeName>
        <fullName evidence="1">Pantoate--beta-alanine ligase</fullName>
    </alternativeName>
    <alternativeName>
        <fullName evidence="1">Pantoate-activating enzyme</fullName>
    </alternativeName>
</protein>
<reference key="1">
    <citation type="journal article" date="2009" name="Science">
        <title>The dynamics and time scale of ongoing genomic erosion in symbiotic bacteria.</title>
        <authorList>
            <person name="Moran N.A."/>
            <person name="McLaughlin H.J."/>
            <person name="Sorek R."/>
        </authorList>
    </citation>
    <scope>NUCLEOTIDE SEQUENCE [LARGE SCALE GENOMIC DNA]</scope>
    <source>
        <strain>5A</strain>
    </source>
</reference>
<evidence type="ECO:0000255" key="1">
    <source>
        <dbReference type="HAMAP-Rule" id="MF_00158"/>
    </source>
</evidence>
<sequence length="285" mass="33269">MHIIKTIKVLYKEIKILKKSNKKIGLVPTMGNLHDGHIKLILLAKKYSDIIIVSIFINPMQFDNLSDLKNYPKTFMKDSIILKKYHVDILFFPHINEIYPNGIEHQTFVEVIKLSKILEGQSRPGHFRGVTTIITKLFNFIQPDFAFFGEKDYQQLLIIKILVKELNYMIKIISLPTIRLKNGLALSSRNNYLSSQENEIAPYLYKIIKKTCEKIIKEDDNIRPKIIHESKILLIKKGFSVDIFDIYDYKNLEHPSKKVKKVILLASVWLGNTRLIDNKKIILNY</sequence>
<dbReference type="EC" id="6.3.2.1" evidence="1"/>
<dbReference type="EMBL" id="CP001161">
    <property type="protein sequence ID" value="ACL30566.1"/>
    <property type="molecule type" value="Genomic_DNA"/>
</dbReference>
<dbReference type="RefSeq" id="WP_009874153.1">
    <property type="nucleotide sequence ID" value="NC_011833.1"/>
</dbReference>
<dbReference type="SMR" id="B8D8Z5"/>
<dbReference type="KEGG" id="bap:BUAP5A_193"/>
<dbReference type="HOGENOM" id="CLU_047148_0_0_6"/>
<dbReference type="OrthoDB" id="9773087at2"/>
<dbReference type="UniPathway" id="UPA00028">
    <property type="reaction ID" value="UER00005"/>
</dbReference>
<dbReference type="Proteomes" id="UP000006904">
    <property type="component" value="Chromosome"/>
</dbReference>
<dbReference type="GO" id="GO:0005829">
    <property type="term" value="C:cytosol"/>
    <property type="evidence" value="ECO:0007669"/>
    <property type="project" value="TreeGrafter"/>
</dbReference>
<dbReference type="GO" id="GO:0005524">
    <property type="term" value="F:ATP binding"/>
    <property type="evidence" value="ECO:0007669"/>
    <property type="project" value="UniProtKB-KW"/>
</dbReference>
<dbReference type="GO" id="GO:0004592">
    <property type="term" value="F:pantoate-beta-alanine ligase activity"/>
    <property type="evidence" value="ECO:0007669"/>
    <property type="project" value="UniProtKB-UniRule"/>
</dbReference>
<dbReference type="GO" id="GO:0015940">
    <property type="term" value="P:pantothenate biosynthetic process"/>
    <property type="evidence" value="ECO:0007669"/>
    <property type="project" value="UniProtKB-UniRule"/>
</dbReference>
<dbReference type="CDD" id="cd00560">
    <property type="entry name" value="PanC"/>
    <property type="match status" value="1"/>
</dbReference>
<dbReference type="FunFam" id="3.40.50.620:FF:000013">
    <property type="entry name" value="Pantothenate synthetase"/>
    <property type="match status" value="1"/>
</dbReference>
<dbReference type="Gene3D" id="3.40.50.620">
    <property type="entry name" value="HUPs"/>
    <property type="match status" value="1"/>
</dbReference>
<dbReference type="Gene3D" id="3.30.1300.10">
    <property type="entry name" value="Pantoate-beta-alanine ligase, C-terminal domain"/>
    <property type="match status" value="1"/>
</dbReference>
<dbReference type="HAMAP" id="MF_00158">
    <property type="entry name" value="PanC"/>
    <property type="match status" value="1"/>
</dbReference>
<dbReference type="InterPro" id="IPR003721">
    <property type="entry name" value="Pantoate_ligase"/>
</dbReference>
<dbReference type="InterPro" id="IPR042176">
    <property type="entry name" value="Pantoate_ligase_C"/>
</dbReference>
<dbReference type="InterPro" id="IPR014729">
    <property type="entry name" value="Rossmann-like_a/b/a_fold"/>
</dbReference>
<dbReference type="NCBIfam" id="TIGR00018">
    <property type="entry name" value="panC"/>
    <property type="match status" value="1"/>
</dbReference>
<dbReference type="PANTHER" id="PTHR21299">
    <property type="entry name" value="CYTIDYLATE KINASE/PANTOATE-BETA-ALANINE LIGASE"/>
    <property type="match status" value="1"/>
</dbReference>
<dbReference type="PANTHER" id="PTHR21299:SF1">
    <property type="entry name" value="PANTOATE--BETA-ALANINE LIGASE"/>
    <property type="match status" value="1"/>
</dbReference>
<dbReference type="Pfam" id="PF02569">
    <property type="entry name" value="Pantoate_ligase"/>
    <property type="match status" value="1"/>
</dbReference>
<dbReference type="SUPFAM" id="SSF52374">
    <property type="entry name" value="Nucleotidylyl transferase"/>
    <property type="match status" value="1"/>
</dbReference>
<keyword id="KW-0067">ATP-binding</keyword>
<keyword id="KW-0963">Cytoplasm</keyword>
<keyword id="KW-0436">Ligase</keyword>
<keyword id="KW-0547">Nucleotide-binding</keyword>
<keyword id="KW-0566">Pantothenate biosynthesis</keyword>
<proteinExistence type="inferred from homology"/>
<name>PANC_BUCA5</name>
<comment type="function">
    <text evidence="1">Catalyzes the condensation of pantoate with beta-alanine in an ATP-dependent reaction via a pantoyl-adenylate intermediate.</text>
</comment>
<comment type="catalytic activity">
    <reaction evidence="1">
        <text>(R)-pantoate + beta-alanine + ATP = (R)-pantothenate + AMP + diphosphate + H(+)</text>
        <dbReference type="Rhea" id="RHEA:10912"/>
        <dbReference type="ChEBI" id="CHEBI:15378"/>
        <dbReference type="ChEBI" id="CHEBI:15980"/>
        <dbReference type="ChEBI" id="CHEBI:29032"/>
        <dbReference type="ChEBI" id="CHEBI:30616"/>
        <dbReference type="ChEBI" id="CHEBI:33019"/>
        <dbReference type="ChEBI" id="CHEBI:57966"/>
        <dbReference type="ChEBI" id="CHEBI:456215"/>
        <dbReference type="EC" id="6.3.2.1"/>
    </reaction>
</comment>
<comment type="pathway">
    <text evidence="1">Cofactor biosynthesis; (R)-pantothenate biosynthesis; (R)-pantothenate from (R)-pantoate and beta-alanine: step 1/1.</text>
</comment>
<comment type="subunit">
    <text evidence="1">Homodimer.</text>
</comment>
<comment type="subcellular location">
    <subcellularLocation>
        <location evidence="1">Cytoplasm</location>
    </subcellularLocation>
</comment>
<comment type="miscellaneous">
    <text evidence="1">The reaction proceeds by a bi uni uni bi ping pong mechanism.</text>
</comment>
<comment type="similarity">
    <text evidence="1">Belongs to the pantothenate synthetase family.</text>
</comment>
<organism>
    <name type="scientific">Buchnera aphidicola subsp. Acyrthosiphon pisum (strain 5A)</name>
    <dbReference type="NCBI Taxonomy" id="563178"/>
    <lineage>
        <taxon>Bacteria</taxon>
        <taxon>Pseudomonadati</taxon>
        <taxon>Pseudomonadota</taxon>
        <taxon>Gammaproteobacteria</taxon>
        <taxon>Enterobacterales</taxon>
        <taxon>Erwiniaceae</taxon>
        <taxon>Buchnera</taxon>
    </lineage>
</organism>
<gene>
    <name evidence="1" type="primary">panC</name>
    <name type="ordered locus">BUAP5A_193</name>
</gene>
<feature type="chain" id="PRO_1000123403" description="Pantothenate synthetase">
    <location>
        <begin position="1"/>
        <end position="285"/>
    </location>
</feature>
<feature type="active site" description="Proton donor" evidence="1">
    <location>
        <position position="37"/>
    </location>
</feature>
<feature type="binding site" evidence="1">
    <location>
        <begin position="30"/>
        <end position="37"/>
    </location>
    <ligand>
        <name>ATP</name>
        <dbReference type="ChEBI" id="CHEBI:30616"/>
    </ligand>
</feature>
<feature type="binding site" evidence="1">
    <location>
        <position position="61"/>
    </location>
    <ligand>
        <name>(R)-pantoate</name>
        <dbReference type="ChEBI" id="CHEBI:15980"/>
    </ligand>
</feature>
<feature type="binding site" evidence="1">
    <location>
        <position position="61"/>
    </location>
    <ligand>
        <name>beta-alanine</name>
        <dbReference type="ChEBI" id="CHEBI:57966"/>
    </ligand>
</feature>
<feature type="binding site" evidence="1">
    <location>
        <begin position="149"/>
        <end position="152"/>
    </location>
    <ligand>
        <name>ATP</name>
        <dbReference type="ChEBI" id="CHEBI:30616"/>
    </ligand>
</feature>
<feature type="binding site" evidence="1">
    <location>
        <position position="155"/>
    </location>
    <ligand>
        <name>(R)-pantoate</name>
        <dbReference type="ChEBI" id="CHEBI:15980"/>
    </ligand>
</feature>
<feature type="binding site" evidence="1">
    <location>
        <position position="178"/>
    </location>
    <ligand>
        <name>ATP</name>
        <dbReference type="ChEBI" id="CHEBI:30616"/>
    </ligand>
</feature>
<feature type="binding site" evidence="1">
    <location>
        <begin position="186"/>
        <end position="189"/>
    </location>
    <ligand>
        <name>ATP</name>
        <dbReference type="ChEBI" id="CHEBI:30616"/>
    </ligand>
</feature>